<protein>
    <recommendedName>
        <fullName evidence="1">Nucleoprotein</fullName>
    </recommendedName>
    <alternativeName>
        <fullName evidence="1">Nucleocapsid protein</fullName>
        <shortName evidence="1">Protein N</shortName>
    </alternativeName>
</protein>
<reference key="1">
    <citation type="submission" date="2007-03" db="EMBL/GenBank/DDBJ databases">
        <title>The NIAID influenza genome sequencing project.</title>
        <authorList>
            <person name="Ghedin E."/>
            <person name="Spiro D."/>
            <person name="Miller N."/>
            <person name="Zaborsky J."/>
            <person name="Feldblyum T."/>
            <person name="Subbu V."/>
            <person name="Shumway M."/>
            <person name="Sparenborg J."/>
            <person name="Groveman L."/>
            <person name="Halpin R."/>
            <person name="Sitz J."/>
            <person name="Koo H."/>
            <person name="Salzberg S.L."/>
            <person name="Webster R.G."/>
            <person name="Hoffmann E."/>
            <person name="Krauss S."/>
            <person name="Naeve C."/>
            <person name="Bao Y."/>
            <person name="Bolotov P."/>
            <person name="Dernovoy D."/>
            <person name="Kiryutin B."/>
            <person name="Lipman D.J."/>
            <person name="Tatusova T."/>
        </authorList>
    </citation>
    <scope>NUCLEOTIDE SEQUENCE [GENOMIC RNA]</scope>
</reference>
<reference key="2">
    <citation type="submission" date="2007-03" db="EMBL/GenBank/DDBJ databases">
        <authorList>
            <consortium name="The NIAID Influenza Genome Sequencing Consortium"/>
        </authorList>
    </citation>
    <scope>NUCLEOTIDE SEQUENCE [GENOMIC RNA]</scope>
</reference>
<accession>A4GCJ0</accession>
<feature type="chain" id="PRO_0000372935" description="Nucleoprotein">
    <location>
        <begin position="1"/>
        <end position="498"/>
    </location>
</feature>
<feature type="region of interest" description="Disordered" evidence="2">
    <location>
        <begin position="1"/>
        <end position="21"/>
    </location>
</feature>
<feature type="short sequence motif" description="Unconventional nuclear localization signal" evidence="1">
    <location>
        <begin position="1"/>
        <end position="18"/>
    </location>
</feature>
<feature type="short sequence motif" description="Bipartite nuclear localization signal" evidence="1">
    <location>
        <begin position="198"/>
        <end position="216"/>
    </location>
</feature>
<feature type="compositionally biased region" description="Basic and acidic residues" evidence="2">
    <location>
        <begin position="8"/>
        <end position="21"/>
    </location>
</feature>
<organismHost>
    <name type="scientific">Aves</name>
    <dbReference type="NCBI Taxonomy" id="8782"/>
</organismHost>
<organismHost>
    <name type="scientific">Homo sapiens</name>
    <name type="common">Human</name>
    <dbReference type="NCBI Taxonomy" id="9606"/>
</organismHost>
<organismHost>
    <name type="scientific">Sus scrofa</name>
    <name type="common">Pig</name>
    <dbReference type="NCBI Taxonomy" id="9823"/>
</organismHost>
<keyword id="KW-0167">Capsid protein</keyword>
<keyword id="KW-1139">Helical capsid protein</keyword>
<keyword id="KW-1048">Host nucleus</keyword>
<keyword id="KW-0945">Host-virus interaction</keyword>
<keyword id="KW-0687">Ribonucleoprotein</keyword>
<keyword id="KW-0694">RNA-binding</keyword>
<keyword id="KW-0543">Viral nucleoprotein</keyword>
<keyword id="KW-1163">Viral penetration into host nucleus</keyword>
<keyword id="KW-0946">Virion</keyword>
<keyword id="KW-1160">Virus entry into host cell</keyword>
<gene>
    <name evidence="1" type="primary">NP</name>
</gene>
<dbReference type="EMBL" id="CY020448">
    <property type="protein sequence ID" value="ABO38355.1"/>
    <property type="molecule type" value="Viral_cRNA"/>
</dbReference>
<dbReference type="SMR" id="A4GCJ0"/>
<dbReference type="PRO" id="PR:A4GCJ0"/>
<dbReference type="Proteomes" id="UP000008213">
    <property type="component" value="Genome"/>
</dbReference>
<dbReference type="GO" id="GO:0019029">
    <property type="term" value="C:helical viral capsid"/>
    <property type="evidence" value="ECO:0007669"/>
    <property type="project" value="UniProtKB-UniRule"/>
</dbReference>
<dbReference type="GO" id="GO:0043657">
    <property type="term" value="C:host cell"/>
    <property type="evidence" value="ECO:0007669"/>
    <property type="project" value="GOC"/>
</dbReference>
<dbReference type="GO" id="GO:0042025">
    <property type="term" value="C:host cell nucleus"/>
    <property type="evidence" value="ECO:0007669"/>
    <property type="project" value="UniProtKB-SubCell"/>
</dbReference>
<dbReference type="GO" id="GO:1990904">
    <property type="term" value="C:ribonucleoprotein complex"/>
    <property type="evidence" value="ECO:0007669"/>
    <property type="project" value="UniProtKB-KW"/>
</dbReference>
<dbReference type="GO" id="GO:0019013">
    <property type="term" value="C:viral nucleocapsid"/>
    <property type="evidence" value="ECO:0007669"/>
    <property type="project" value="UniProtKB-UniRule"/>
</dbReference>
<dbReference type="GO" id="GO:0003723">
    <property type="term" value="F:RNA binding"/>
    <property type="evidence" value="ECO:0007669"/>
    <property type="project" value="UniProtKB-UniRule"/>
</dbReference>
<dbReference type="GO" id="GO:0005198">
    <property type="term" value="F:structural molecule activity"/>
    <property type="evidence" value="ECO:0007669"/>
    <property type="project" value="UniProtKB-UniRule"/>
</dbReference>
<dbReference type="GO" id="GO:0046718">
    <property type="term" value="P:symbiont entry into host cell"/>
    <property type="evidence" value="ECO:0007669"/>
    <property type="project" value="UniProtKB-KW"/>
</dbReference>
<dbReference type="GO" id="GO:0075732">
    <property type="term" value="P:viral penetration into host nucleus"/>
    <property type="evidence" value="ECO:0007669"/>
    <property type="project" value="UniProtKB-UniRule"/>
</dbReference>
<dbReference type="HAMAP" id="MF_04070">
    <property type="entry name" value="INFV_NCAP"/>
    <property type="match status" value="1"/>
</dbReference>
<dbReference type="InterPro" id="IPR002141">
    <property type="entry name" value="Flu_NP"/>
</dbReference>
<dbReference type="Pfam" id="PF00506">
    <property type="entry name" value="Flu_NP"/>
    <property type="match status" value="1"/>
</dbReference>
<dbReference type="SUPFAM" id="SSF161003">
    <property type="entry name" value="flu NP-like"/>
    <property type="match status" value="1"/>
</dbReference>
<evidence type="ECO:0000255" key="1">
    <source>
        <dbReference type="HAMAP-Rule" id="MF_04070"/>
    </source>
</evidence>
<evidence type="ECO:0000256" key="2">
    <source>
        <dbReference type="SAM" id="MobiDB-lite"/>
    </source>
</evidence>
<comment type="function">
    <text evidence="1">Encapsidates the negative strand viral RNA, protecting it from nucleases. The encapsidated genomic RNA is termed the ribonucleoprotein (RNP) and serves as template for transcription and replication. The RNP needs to be localized in the host nucleus to start an infectious cycle, but is too large to diffuse through the nuclear pore complex. NP comprises at least 2 nuclear localization signals that are responsible for the active RNP import into the nucleus through cellular importin alpha/beta pathway. Later in the infection, nclear export of RNPs are mediated through viral proteins NEP interacting with M1 which binds nucleoproteins. It is possible that nucleoprotein binds directly host exportin-1/XPO1 and plays an active role in RNPs nuclear export. M1 interaction with RNP seems to hide nucleoprotein's nuclear localization signals. Soon after a virion infects a new cell, M1 dissociates from the RNP under acidification of the virion driven by M2 protein. Dissociation of M1 from RNP unmasks nucleoprotein's nuclear localization signals, targeting the RNP to the nucleus.</text>
</comment>
<comment type="subunit">
    <text evidence="1">Homomultimerizes to form the nucleocapsid. May bind host exportin-1/XPO1. Binds to viral genomic RNA. Protein-RNA contacts are mediated by a combination of electrostatic interactions between positively charged residues and the phosphate backbone and planar interactions between aromatic side chains and bases.</text>
</comment>
<comment type="subcellular location">
    <subcellularLocation>
        <location evidence="1">Virion</location>
    </subcellularLocation>
    <subcellularLocation>
        <location evidence="1">Host nucleus</location>
    </subcellularLocation>
</comment>
<comment type="PTM">
    <text evidence="1">Late in virus-infected cells, may be cleaved from a 56-kDa protein to a 53-kDa protein by a cellular caspase. This cleavage might be a marker for the onset of apoptosis in infected cells or have a specific function in virus host interaction.</text>
</comment>
<comment type="similarity">
    <text evidence="1">Belongs to the influenza viruses nucleoprotein family.</text>
</comment>
<proteinExistence type="inferred from homology"/>
<organism>
    <name type="scientific">Influenza A virus (strain A/Henry/1936 H1N1)</name>
    <dbReference type="NCBI Taxonomy" id="425562"/>
    <lineage>
        <taxon>Viruses</taxon>
        <taxon>Riboviria</taxon>
        <taxon>Orthornavirae</taxon>
        <taxon>Negarnaviricota</taxon>
        <taxon>Polyploviricotina</taxon>
        <taxon>Insthoviricetes</taxon>
        <taxon>Articulavirales</taxon>
        <taxon>Orthomyxoviridae</taxon>
        <taxon>Alphainfluenzavirus</taxon>
        <taxon>Alphainfluenzavirus influenzae</taxon>
        <taxon>Influenza A virus</taxon>
    </lineage>
</organism>
<name>NCAP_I36A0</name>
<sequence length="498" mass="56185">MASQGTKRSYEQMETDGERQNATEIRASVGKMIGGIGRFYIQMCTELKLSDYEGRLIQNSLTIERMVLSAFDERRNKYLEEHPSAGKDPKKTGGPIYRRVNGKWMRELILYDKEEIRRIWRQANNGDDATAGLTHMMIWHSNLNDTTYQRTRALVRTGMDPRMCSLMQGSTLPRRSGAAGAAVKGVGTMVMELIRMIKRGINDRNFWRGENGRKTRIAYERMCNILKGKFQTAAQKAMMDQVRESRNPGNAEFEDLTFLARSALILRGSVAHKSCLPACVYGPAVASGYDFEREGYSLVGIDPFRLLQNSQVYSLIRPNENPAHKSQLVWMACHSAAFEDLRVLSFIKGTKVVPRGKLSTRGVQIASNENMETMESSTLELRSKYWAIRTRSGGNTNQQRASAGQISIQPTFSVQRNLPFDRTTVMAAFTGNTEGRTSDMRTEIIRMMESARPEDVSFQGRGVFELSDEKAASPIVPSFDMSNEGSYFFGDNAEEYDN</sequence>